<evidence type="ECO:0000255" key="1">
    <source>
        <dbReference type="HAMAP-Rule" id="MF_01326"/>
    </source>
</evidence>
<evidence type="ECO:0000305" key="2"/>
<sequence length="102" mass="10709">MNKIRKGDEVIVITGKDKGKRGVVLAVGAEHVTVEGINLVKKHVKPNPMKGTTGGVEAKTMPLHISNVALVDANGKASRVGIKVEDGKKVRFLKTTGAVLSA</sequence>
<proteinExistence type="inferred from homology"/>
<keyword id="KW-0687">Ribonucleoprotein</keyword>
<keyword id="KW-0689">Ribosomal protein</keyword>
<keyword id="KW-0694">RNA-binding</keyword>
<keyword id="KW-0699">rRNA-binding</keyword>
<gene>
    <name evidence="1" type="primary">rplX</name>
    <name type="ordered locus">BURPS1710b_3765</name>
</gene>
<organism>
    <name type="scientific">Burkholderia pseudomallei (strain 1710b)</name>
    <dbReference type="NCBI Taxonomy" id="320372"/>
    <lineage>
        <taxon>Bacteria</taxon>
        <taxon>Pseudomonadati</taxon>
        <taxon>Pseudomonadota</taxon>
        <taxon>Betaproteobacteria</taxon>
        <taxon>Burkholderiales</taxon>
        <taxon>Burkholderiaceae</taxon>
        <taxon>Burkholderia</taxon>
        <taxon>pseudomallei group</taxon>
    </lineage>
</organism>
<accession>Q3JMS4</accession>
<comment type="function">
    <text evidence="1">One of two assembly initiator proteins, it binds directly to the 5'-end of the 23S rRNA, where it nucleates assembly of the 50S subunit.</text>
</comment>
<comment type="function">
    <text evidence="1">One of the proteins that surrounds the polypeptide exit tunnel on the outside of the subunit.</text>
</comment>
<comment type="subunit">
    <text evidence="1">Part of the 50S ribosomal subunit.</text>
</comment>
<comment type="similarity">
    <text evidence="1">Belongs to the universal ribosomal protein uL24 family.</text>
</comment>
<reference key="1">
    <citation type="journal article" date="2010" name="Genome Biol. Evol.">
        <title>Continuing evolution of Burkholderia mallei through genome reduction and large-scale rearrangements.</title>
        <authorList>
            <person name="Losada L."/>
            <person name="Ronning C.M."/>
            <person name="DeShazer D."/>
            <person name="Woods D."/>
            <person name="Fedorova N."/>
            <person name="Kim H.S."/>
            <person name="Shabalina S.A."/>
            <person name="Pearson T.R."/>
            <person name="Brinkac L."/>
            <person name="Tan P."/>
            <person name="Nandi T."/>
            <person name="Crabtree J."/>
            <person name="Badger J."/>
            <person name="Beckstrom-Sternberg S."/>
            <person name="Saqib M."/>
            <person name="Schutzer S.E."/>
            <person name="Keim P."/>
            <person name="Nierman W.C."/>
        </authorList>
    </citation>
    <scope>NUCLEOTIDE SEQUENCE [LARGE SCALE GENOMIC DNA]</scope>
    <source>
        <strain>1710b</strain>
    </source>
</reference>
<protein>
    <recommendedName>
        <fullName evidence="1">Large ribosomal subunit protein uL24</fullName>
    </recommendedName>
    <alternativeName>
        <fullName evidence="2">50S ribosomal protein L24</fullName>
    </alternativeName>
</protein>
<name>RL24_BURP1</name>
<feature type="chain" id="PRO_0000241578" description="Large ribosomal subunit protein uL24">
    <location>
        <begin position="1"/>
        <end position="102"/>
    </location>
</feature>
<dbReference type="EMBL" id="CP000124">
    <property type="protein sequence ID" value="ABA49387.1"/>
    <property type="molecule type" value="Genomic_DNA"/>
</dbReference>
<dbReference type="RefSeq" id="WP_004197950.1">
    <property type="nucleotide sequence ID" value="NC_007434.1"/>
</dbReference>
<dbReference type="SMR" id="Q3JMS4"/>
<dbReference type="EnsemblBacteria" id="ABA49387">
    <property type="protein sequence ID" value="ABA49387"/>
    <property type="gene ID" value="BURPS1710b_3765"/>
</dbReference>
<dbReference type="GeneID" id="93061821"/>
<dbReference type="KEGG" id="bpm:BURPS1710b_3765"/>
<dbReference type="HOGENOM" id="CLU_093315_2_2_4"/>
<dbReference type="Proteomes" id="UP000002700">
    <property type="component" value="Chromosome I"/>
</dbReference>
<dbReference type="GO" id="GO:1990904">
    <property type="term" value="C:ribonucleoprotein complex"/>
    <property type="evidence" value="ECO:0007669"/>
    <property type="project" value="UniProtKB-KW"/>
</dbReference>
<dbReference type="GO" id="GO:0005840">
    <property type="term" value="C:ribosome"/>
    <property type="evidence" value="ECO:0007669"/>
    <property type="project" value="UniProtKB-KW"/>
</dbReference>
<dbReference type="GO" id="GO:0019843">
    <property type="term" value="F:rRNA binding"/>
    <property type="evidence" value="ECO:0007669"/>
    <property type="project" value="UniProtKB-UniRule"/>
</dbReference>
<dbReference type="GO" id="GO:0003735">
    <property type="term" value="F:structural constituent of ribosome"/>
    <property type="evidence" value="ECO:0007669"/>
    <property type="project" value="InterPro"/>
</dbReference>
<dbReference type="GO" id="GO:0006412">
    <property type="term" value="P:translation"/>
    <property type="evidence" value="ECO:0007669"/>
    <property type="project" value="UniProtKB-UniRule"/>
</dbReference>
<dbReference type="CDD" id="cd06089">
    <property type="entry name" value="KOW_RPL26"/>
    <property type="match status" value="1"/>
</dbReference>
<dbReference type="Gene3D" id="2.30.30.30">
    <property type="match status" value="1"/>
</dbReference>
<dbReference type="HAMAP" id="MF_01326_B">
    <property type="entry name" value="Ribosomal_uL24_B"/>
    <property type="match status" value="1"/>
</dbReference>
<dbReference type="InterPro" id="IPR005824">
    <property type="entry name" value="KOW"/>
</dbReference>
<dbReference type="InterPro" id="IPR014722">
    <property type="entry name" value="Rib_uL2_dom2"/>
</dbReference>
<dbReference type="InterPro" id="IPR003256">
    <property type="entry name" value="Ribosomal_uL24"/>
</dbReference>
<dbReference type="InterPro" id="IPR005825">
    <property type="entry name" value="Ribosomal_uL24_CS"/>
</dbReference>
<dbReference type="InterPro" id="IPR041988">
    <property type="entry name" value="Ribosomal_uL24_KOW"/>
</dbReference>
<dbReference type="InterPro" id="IPR008991">
    <property type="entry name" value="Translation_prot_SH3-like_sf"/>
</dbReference>
<dbReference type="NCBIfam" id="TIGR01079">
    <property type="entry name" value="rplX_bact"/>
    <property type="match status" value="1"/>
</dbReference>
<dbReference type="PANTHER" id="PTHR12903">
    <property type="entry name" value="MITOCHONDRIAL RIBOSOMAL PROTEIN L24"/>
    <property type="match status" value="1"/>
</dbReference>
<dbReference type="Pfam" id="PF00467">
    <property type="entry name" value="KOW"/>
    <property type="match status" value="1"/>
</dbReference>
<dbReference type="Pfam" id="PF17136">
    <property type="entry name" value="ribosomal_L24"/>
    <property type="match status" value="1"/>
</dbReference>
<dbReference type="SUPFAM" id="SSF50104">
    <property type="entry name" value="Translation proteins SH3-like domain"/>
    <property type="match status" value="1"/>
</dbReference>
<dbReference type="PROSITE" id="PS01108">
    <property type="entry name" value="RIBOSOMAL_L24"/>
    <property type="match status" value="1"/>
</dbReference>